<reference evidence="9 10" key="1">
    <citation type="journal article" date="1999" name="DNA Res.">
        <title>Complete genome sequence of an aerobic hyper-thermophilic crenarchaeon, Aeropyrum pernix K1.</title>
        <authorList>
            <person name="Kawarabayasi Y."/>
            <person name="Hino Y."/>
            <person name="Horikawa H."/>
            <person name="Yamazaki S."/>
            <person name="Haikawa Y."/>
            <person name="Jin-no K."/>
            <person name="Takahashi M."/>
            <person name="Sekine M."/>
            <person name="Baba S."/>
            <person name="Ankai A."/>
            <person name="Kosugi H."/>
            <person name="Hosoyama A."/>
            <person name="Fukui S."/>
            <person name="Nagai Y."/>
            <person name="Nishijima K."/>
            <person name="Nakazawa H."/>
            <person name="Takamiya M."/>
            <person name="Masuda S."/>
            <person name="Funahashi T."/>
            <person name="Tanaka T."/>
            <person name="Kudoh Y."/>
            <person name="Yamazaki J."/>
            <person name="Kushida N."/>
            <person name="Oguchi A."/>
            <person name="Aoki K."/>
            <person name="Kubota K."/>
            <person name="Nakamura Y."/>
            <person name="Nomura N."/>
            <person name="Sako Y."/>
            <person name="Kikuchi H."/>
        </authorList>
    </citation>
    <scope>NUCLEOTIDE SEQUENCE [LARGE SCALE GENOMIC DNA]</scope>
    <source>
        <strain evidence="10">ATCC 700893 / DSM 11879 / JCM 9820 / NBRC 100138 / K1</strain>
    </source>
</reference>
<reference key="2">
    <citation type="journal article" date="2003" name="Nucleic Acids Res.">
        <title>A nomenclature for restriction enzymes, DNA methyltransferases, homing endonucleases and their genes.</title>
        <authorList>
            <person name="Roberts R.J."/>
            <person name="Belfort M."/>
            <person name="Bestor T."/>
            <person name="Bhagwat A.S."/>
            <person name="Bickle T.A."/>
            <person name="Bitinaite J."/>
            <person name="Blumenthal R.M."/>
            <person name="Degtyarev S.K."/>
            <person name="Dryden D.T."/>
            <person name="Dybvig K."/>
            <person name="Firman K."/>
            <person name="Gromova E.S."/>
            <person name="Gumport R.I."/>
            <person name="Halford S.E."/>
            <person name="Hattman S."/>
            <person name="Heitman J."/>
            <person name="Hornby D.P."/>
            <person name="Janulaitis A."/>
            <person name="Jeltsch A."/>
            <person name="Josephsen J."/>
            <person name="Kiss A."/>
            <person name="Klaenhammer T.R."/>
            <person name="Kobayashi I."/>
            <person name="Kong H."/>
            <person name="Krueger D.H."/>
            <person name="Lacks S."/>
            <person name="Marinus M.G."/>
            <person name="Miyahara M."/>
            <person name="Morgan R.D."/>
            <person name="Murray N.E."/>
            <person name="Nagaraja V."/>
            <person name="Piekarowicz A."/>
            <person name="Pingoud A."/>
            <person name="Raleigh E."/>
            <person name="Rao D.N."/>
            <person name="Reich N."/>
            <person name="Repin V.E."/>
            <person name="Selker E.U."/>
            <person name="Shaw P.C."/>
            <person name="Stein D.C."/>
            <person name="Stoddard B.L."/>
            <person name="Szybalski W."/>
            <person name="Trautner T.A."/>
            <person name="Van Etten J.L."/>
            <person name="Vitor J.M."/>
            <person name="Wilson G.G."/>
            <person name="Xu S.Y."/>
        </authorList>
    </citation>
    <scope>NOMENCLATURE</scope>
</reference>
<reference key="3">
    <citation type="journal article" date="2021" name="Microbiol. Spectr.">
        <title>Evaluation of the Properties of the DNA Methyltransferase from Aeropyrum pernix K1.</title>
        <authorList>
            <person name="Hayashi M."/>
            <person name="Sugahara K."/>
            <person name="Yamamura A."/>
            <person name="Iida Y."/>
        </authorList>
    </citation>
    <scope>FUNCTION</scope>
    <scope>CATALYTIC ACTIVITY</scope>
    <scope>BIOPHYSICOCHEMICAL PROPERTIES</scope>
    <scope>BIOTECHNOLOGY</scope>
    <source>
        <strain evidence="6">ATCC 700893 / DSM 11879 / JCM 9820 / NBRC 100138 / K1</strain>
    </source>
</reference>
<keyword id="KW-0238">DNA-binding</keyword>
<keyword id="KW-0489">Methyltransferase</keyword>
<keyword id="KW-1185">Reference proteome</keyword>
<keyword id="KW-0680">Restriction system</keyword>
<keyword id="KW-0949">S-adenosyl-L-methionine</keyword>
<keyword id="KW-0808">Transferase</keyword>
<protein>
    <recommendedName>
        <fullName evidence="6">DNA (cytosine-5-)-methyltransferase M.ApeKI</fullName>
        <shortName evidence="5 6">M.ApeKI</shortName>
        <ecNumber evidence="2 4">2.1.1.37</ecNumber>
    </recommendedName>
    <alternativeName>
        <fullName evidence="7">Cytosine-specific methyltransferase ApeKI</fullName>
    </alternativeName>
    <alternativeName>
        <fullName evidence="7">Modification methylase ApeKI</fullName>
    </alternativeName>
    <alternativeName>
        <fullName evidence="5">Type II methyltransferase M.ApeKI</fullName>
    </alternativeName>
</protein>
<gene>
    <name evidence="9" type="ordered locus">APE_0872.1</name>
</gene>
<proteinExistence type="evidence at protein level"/>
<sequence>MSRYSTISLFSGAGGLDLGFVQSGRFRIVFANEILLPAAVTYSRNLGLRLEVCGDEPRVEAQPGTIMACDVAKLDFTGLSGVDADVIIGGPPCQDFSIVRGPDWDRRGINVKRGRLYAHFVRALASLQPKAFVFENVPGLVSANRGLAYKVILEDFARLSIRWDEIKRIVSSNGNGGKVEGYEIVFTGIVDFSKLGVPQKRERLVIIGLRKDLAGGGFETISRLRARIDHVLSGKRWLLHRYPLTPIEVFEGQPLDRLGDKYKEVMLKWEGVWDEVGTERAFEWKRRVWDRLTFDIISDYLSFNGIKHADKQELEEALMQHEVLLKELGYYGRPVYSLKLPDSTTEPPYEGKAVVERMKRIPPDENHEFVRGTRWEVEGRGISLVYRRIHPLKPSYTVVAYGGGGTHGYHYDRDRATLTLRERARLQTFPDSFLFYGKKPEIRAQIGEAVPPLAAKRIAEALAEVLDAV</sequence>
<comment type="function">
    <text evidence="4">Cytosine methylase that recognizes the double-stranded sequence 5'-GC(A/T)GC-3', methylates C-5 position of the second cytosine on both strands, and protects the DNA from cleavage by the ApeKI endonuclease.</text>
</comment>
<comment type="catalytic activity">
    <reaction evidence="2 4">
        <text>a 2'-deoxycytidine in DNA + S-adenosyl-L-methionine = a 5-methyl-2'-deoxycytidine in DNA + S-adenosyl-L-homocysteine + H(+)</text>
        <dbReference type="Rhea" id="RHEA:13681"/>
        <dbReference type="Rhea" id="RHEA-COMP:11369"/>
        <dbReference type="Rhea" id="RHEA-COMP:11370"/>
        <dbReference type="ChEBI" id="CHEBI:15378"/>
        <dbReference type="ChEBI" id="CHEBI:57856"/>
        <dbReference type="ChEBI" id="CHEBI:59789"/>
        <dbReference type="ChEBI" id="CHEBI:85452"/>
        <dbReference type="ChEBI" id="CHEBI:85454"/>
        <dbReference type="EC" id="2.1.1.37"/>
    </reaction>
    <physiologicalReaction direction="left-to-right" evidence="4">
        <dbReference type="Rhea" id="RHEA:13682"/>
    </physiologicalReaction>
</comment>
<comment type="biophysicochemical properties">
    <temperatureDependence>
        <text evidence="4">Optimum temperature is between 70-90 degrees Celsius. Highly thermostable. 34% of the activity of the unheated sample after incubation at 90 degrees Celsius for 10 hours. Lowest activity detected at 10 degrees Celsius.</text>
    </temperatureDependence>
</comment>
<comment type="biotechnology">
    <text evidence="8">This protein may be useful as an epigenetic editing tool due to its high thermostability.</text>
</comment>
<comment type="similarity">
    <text evidence="1 3">Belongs to the class I-like SAM-binding methyltransferase superfamily. C5-methyltransferase family.</text>
</comment>
<feature type="chain" id="PRO_0000454724" description="DNA (cytosine-5-)-methyltransferase M.ApeKI">
    <location>
        <begin position="1"/>
        <end position="469"/>
    </location>
</feature>
<feature type="domain" description="SAM-dependent MTase C5-type" evidence="1">
    <location>
        <begin position="4"/>
        <end position="469"/>
    </location>
</feature>
<feature type="active site" evidence="1 2">
    <location>
        <position position="93"/>
    </location>
</feature>
<evidence type="ECO:0000255" key="1">
    <source>
        <dbReference type="PROSITE-ProRule" id="PRU01016"/>
    </source>
</evidence>
<evidence type="ECO:0000255" key="2">
    <source>
        <dbReference type="PROSITE-ProRule" id="PRU10018"/>
    </source>
</evidence>
<evidence type="ECO:0000255" key="3">
    <source>
        <dbReference type="RuleBase" id="RU000416"/>
    </source>
</evidence>
<evidence type="ECO:0000269" key="4">
    <source>
    </source>
</evidence>
<evidence type="ECO:0000303" key="5">
    <source>
    </source>
</evidence>
<evidence type="ECO:0000303" key="6">
    <source>
    </source>
</evidence>
<evidence type="ECO:0000305" key="7"/>
<evidence type="ECO:0000305" key="8">
    <source>
    </source>
</evidence>
<evidence type="ECO:0000312" key="9">
    <source>
        <dbReference type="EMBL" id="BAA79854.2"/>
    </source>
</evidence>
<evidence type="ECO:0000312" key="10">
    <source>
        <dbReference type="Proteomes" id="UP000002518"/>
    </source>
</evidence>
<organism evidence="9">
    <name type="scientific">Aeropyrum pernix (strain ATCC 700893 / DSM 11879 / JCM 9820 / NBRC 100138 / K1)</name>
    <dbReference type="NCBI Taxonomy" id="272557"/>
    <lineage>
        <taxon>Archaea</taxon>
        <taxon>Thermoproteota</taxon>
        <taxon>Thermoprotei</taxon>
        <taxon>Desulfurococcales</taxon>
        <taxon>Desulfurococcaceae</taxon>
        <taxon>Aeropyrum</taxon>
    </lineage>
</organism>
<name>MT872_AERPE</name>
<accession>Q9YDP3</accession>
<dbReference type="EC" id="2.1.1.37" evidence="2 4"/>
<dbReference type="EMBL" id="BA000002">
    <property type="protein sequence ID" value="BAA79854.2"/>
    <property type="molecule type" value="Genomic_DNA"/>
</dbReference>
<dbReference type="PIR" id="F72681">
    <property type="entry name" value="F72681"/>
</dbReference>
<dbReference type="RefSeq" id="WP_010866032.1">
    <property type="nucleotide sequence ID" value="NC_000854.2"/>
</dbReference>
<dbReference type="STRING" id="272557.APE_0872.1"/>
<dbReference type="REBASE" id="4179">
    <property type="entry name" value="M.ApeKI"/>
</dbReference>
<dbReference type="EnsemblBacteria" id="BAA79854">
    <property type="protein sequence ID" value="BAA79854"/>
    <property type="gene ID" value="APE_0872.1"/>
</dbReference>
<dbReference type="GeneID" id="1444967"/>
<dbReference type="KEGG" id="ape:APE_0872.1"/>
<dbReference type="PATRIC" id="fig|272557.25.peg.626"/>
<dbReference type="eggNOG" id="arCOG04157">
    <property type="taxonomic scope" value="Archaea"/>
</dbReference>
<dbReference type="Proteomes" id="UP000002518">
    <property type="component" value="Chromosome"/>
</dbReference>
<dbReference type="GO" id="GO:0003886">
    <property type="term" value="F:DNA (cytosine-5-)-methyltransferase activity"/>
    <property type="evidence" value="ECO:0000314"/>
    <property type="project" value="UniProtKB"/>
</dbReference>
<dbReference type="GO" id="GO:0003677">
    <property type="term" value="F:DNA binding"/>
    <property type="evidence" value="ECO:0007669"/>
    <property type="project" value="UniProtKB-KW"/>
</dbReference>
<dbReference type="GO" id="GO:0009307">
    <property type="term" value="P:DNA restriction-modification system"/>
    <property type="evidence" value="ECO:0000303"/>
    <property type="project" value="GO_Central"/>
</dbReference>
<dbReference type="GO" id="GO:0032259">
    <property type="term" value="P:methylation"/>
    <property type="evidence" value="ECO:0007669"/>
    <property type="project" value="UniProtKB-KW"/>
</dbReference>
<dbReference type="GO" id="GO:0044027">
    <property type="term" value="P:negative regulation of gene expression via chromosomal CpG island methylation"/>
    <property type="evidence" value="ECO:0007669"/>
    <property type="project" value="TreeGrafter"/>
</dbReference>
<dbReference type="Gene3D" id="3.90.120.10">
    <property type="entry name" value="DNA Methylase, subunit A, domain 2"/>
    <property type="match status" value="1"/>
</dbReference>
<dbReference type="Gene3D" id="3.40.50.150">
    <property type="entry name" value="Vaccinia Virus protein VP39"/>
    <property type="match status" value="1"/>
</dbReference>
<dbReference type="InterPro" id="IPR050390">
    <property type="entry name" value="C5-Methyltransferase"/>
</dbReference>
<dbReference type="InterPro" id="IPR018117">
    <property type="entry name" value="C5_DNA_meth_AS"/>
</dbReference>
<dbReference type="InterPro" id="IPR001525">
    <property type="entry name" value="C5_MeTfrase"/>
</dbReference>
<dbReference type="InterPro" id="IPR029063">
    <property type="entry name" value="SAM-dependent_MTases_sf"/>
</dbReference>
<dbReference type="NCBIfam" id="TIGR00675">
    <property type="entry name" value="dcm"/>
    <property type="match status" value="1"/>
</dbReference>
<dbReference type="PANTHER" id="PTHR10629">
    <property type="entry name" value="CYTOSINE-SPECIFIC METHYLTRANSFERASE"/>
    <property type="match status" value="1"/>
</dbReference>
<dbReference type="PANTHER" id="PTHR10629:SF52">
    <property type="entry name" value="DNA (CYTOSINE-5)-METHYLTRANSFERASE 1"/>
    <property type="match status" value="1"/>
</dbReference>
<dbReference type="Pfam" id="PF00145">
    <property type="entry name" value="DNA_methylase"/>
    <property type="match status" value="2"/>
</dbReference>
<dbReference type="PRINTS" id="PR00105">
    <property type="entry name" value="C5METTRFRASE"/>
</dbReference>
<dbReference type="SUPFAM" id="SSF53335">
    <property type="entry name" value="S-adenosyl-L-methionine-dependent methyltransferases"/>
    <property type="match status" value="1"/>
</dbReference>
<dbReference type="PROSITE" id="PS00094">
    <property type="entry name" value="C5_MTASE_1"/>
    <property type="match status" value="1"/>
</dbReference>
<dbReference type="PROSITE" id="PS51679">
    <property type="entry name" value="SAM_MT_C5"/>
    <property type="match status" value="1"/>
</dbReference>